<proteinExistence type="inferred from homology"/>
<keyword id="KW-0488">Methylation</keyword>
<keyword id="KW-0687">Ribonucleoprotein</keyword>
<keyword id="KW-0689">Ribosomal protein</keyword>
<keyword id="KW-0694">RNA-binding</keyword>
<keyword id="KW-0699">rRNA-binding</keyword>
<keyword id="KW-0820">tRNA-binding</keyword>
<feature type="chain" id="PRO_1000194148" description="Small ribosomal subunit protein uS12">
    <location>
        <begin position="1"/>
        <end position="125"/>
    </location>
</feature>
<feature type="modified residue" description="3-methylthioaspartic acid" evidence="1">
    <location>
        <position position="89"/>
    </location>
</feature>
<reference key="1">
    <citation type="journal article" date="2007" name="PLoS ONE">
        <title>Analysis of the neurotoxin complex genes in Clostridium botulinum A1-A4 and B1 strains: BoNT/A3, /Ba4 and /B1 clusters are located within plasmids.</title>
        <authorList>
            <person name="Smith T.J."/>
            <person name="Hill K.K."/>
            <person name="Foley B.T."/>
            <person name="Detter J.C."/>
            <person name="Munk A.C."/>
            <person name="Bruce D.C."/>
            <person name="Doggett N.A."/>
            <person name="Smith L.A."/>
            <person name="Marks J.D."/>
            <person name="Xie G."/>
            <person name="Brettin T.S."/>
        </authorList>
    </citation>
    <scope>NUCLEOTIDE SEQUENCE [LARGE SCALE GENOMIC DNA]</scope>
    <source>
        <strain>Okra / Type B1</strain>
    </source>
</reference>
<gene>
    <name evidence="2" type="primary">rpsL</name>
    <name type="ordered locus">CLD_1019</name>
</gene>
<name>RS12_CLOBK</name>
<comment type="function">
    <text evidence="2">With S4 and S5 plays an important role in translational accuracy.</text>
</comment>
<comment type="function">
    <text evidence="2">Interacts with and stabilizes bases of the 16S rRNA that are involved in tRNA selection in the A site and with the mRNA backbone. Located at the interface of the 30S and 50S subunits, it traverses the body of the 30S subunit contacting proteins on the other side and probably holding the rRNA structure together. The combined cluster of proteins S8, S12 and S17 appears to hold together the shoulder and platform of the 30S subunit.</text>
</comment>
<comment type="subunit">
    <text evidence="2">Part of the 30S ribosomal subunit. Contacts proteins S8 and S17. May interact with IF1 in the 30S initiation complex.</text>
</comment>
<comment type="similarity">
    <text evidence="2">Belongs to the universal ribosomal protein uS12 family.</text>
</comment>
<organism>
    <name type="scientific">Clostridium botulinum (strain Okra / Type B1)</name>
    <dbReference type="NCBI Taxonomy" id="498213"/>
    <lineage>
        <taxon>Bacteria</taxon>
        <taxon>Bacillati</taxon>
        <taxon>Bacillota</taxon>
        <taxon>Clostridia</taxon>
        <taxon>Eubacteriales</taxon>
        <taxon>Clostridiaceae</taxon>
        <taxon>Clostridium</taxon>
    </lineage>
</organism>
<protein>
    <recommendedName>
        <fullName evidence="2">Small ribosomal subunit protein uS12</fullName>
    </recommendedName>
    <alternativeName>
        <fullName evidence="3">30S ribosomal protein S12</fullName>
    </alternativeName>
</protein>
<accession>B1IGF9</accession>
<evidence type="ECO:0000250" key="1"/>
<evidence type="ECO:0000255" key="2">
    <source>
        <dbReference type="HAMAP-Rule" id="MF_00403"/>
    </source>
</evidence>
<evidence type="ECO:0000305" key="3"/>
<dbReference type="EMBL" id="CP000939">
    <property type="protein sequence ID" value="ACA43603.1"/>
    <property type="molecule type" value="Genomic_DNA"/>
</dbReference>
<dbReference type="RefSeq" id="WP_003357676.1">
    <property type="nucleotide sequence ID" value="NC_010516.1"/>
</dbReference>
<dbReference type="SMR" id="B1IGF9"/>
<dbReference type="GeneID" id="92940255"/>
<dbReference type="KEGG" id="cbb:CLD_1019"/>
<dbReference type="HOGENOM" id="CLU_104295_1_2_9"/>
<dbReference type="Proteomes" id="UP000008541">
    <property type="component" value="Chromosome"/>
</dbReference>
<dbReference type="GO" id="GO:0015935">
    <property type="term" value="C:small ribosomal subunit"/>
    <property type="evidence" value="ECO:0007669"/>
    <property type="project" value="InterPro"/>
</dbReference>
<dbReference type="GO" id="GO:0019843">
    <property type="term" value="F:rRNA binding"/>
    <property type="evidence" value="ECO:0007669"/>
    <property type="project" value="UniProtKB-UniRule"/>
</dbReference>
<dbReference type="GO" id="GO:0003735">
    <property type="term" value="F:structural constituent of ribosome"/>
    <property type="evidence" value="ECO:0007669"/>
    <property type="project" value="InterPro"/>
</dbReference>
<dbReference type="GO" id="GO:0000049">
    <property type="term" value="F:tRNA binding"/>
    <property type="evidence" value="ECO:0007669"/>
    <property type="project" value="UniProtKB-UniRule"/>
</dbReference>
<dbReference type="GO" id="GO:0006412">
    <property type="term" value="P:translation"/>
    <property type="evidence" value="ECO:0007669"/>
    <property type="project" value="UniProtKB-UniRule"/>
</dbReference>
<dbReference type="CDD" id="cd03368">
    <property type="entry name" value="Ribosomal_S12"/>
    <property type="match status" value="1"/>
</dbReference>
<dbReference type="FunFam" id="2.40.50.140:FF:000001">
    <property type="entry name" value="30S ribosomal protein S12"/>
    <property type="match status" value="1"/>
</dbReference>
<dbReference type="Gene3D" id="2.40.50.140">
    <property type="entry name" value="Nucleic acid-binding proteins"/>
    <property type="match status" value="1"/>
</dbReference>
<dbReference type="HAMAP" id="MF_00403_B">
    <property type="entry name" value="Ribosomal_uS12_B"/>
    <property type="match status" value="1"/>
</dbReference>
<dbReference type="InterPro" id="IPR012340">
    <property type="entry name" value="NA-bd_OB-fold"/>
</dbReference>
<dbReference type="InterPro" id="IPR006032">
    <property type="entry name" value="Ribosomal_uS12"/>
</dbReference>
<dbReference type="InterPro" id="IPR005679">
    <property type="entry name" value="Ribosomal_uS12_bac"/>
</dbReference>
<dbReference type="NCBIfam" id="TIGR00981">
    <property type="entry name" value="rpsL_bact"/>
    <property type="match status" value="1"/>
</dbReference>
<dbReference type="PANTHER" id="PTHR11652">
    <property type="entry name" value="30S RIBOSOMAL PROTEIN S12 FAMILY MEMBER"/>
    <property type="match status" value="1"/>
</dbReference>
<dbReference type="Pfam" id="PF00164">
    <property type="entry name" value="Ribosom_S12_S23"/>
    <property type="match status" value="1"/>
</dbReference>
<dbReference type="PIRSF" id="PIRSF002133">
    <property type="entry name" value="Ribosomal_S12/S23"/>
    <property type="match status" value="1"/>
</dbReference>
<dbReference type="PRINTS" id="PR01034">
    <property type="entry name" value="RIBOSOMALS12"/>
</dbReference>
<dbReference type="SUPFAM" id="SSF50249">
    <property type="entry name" value="Nucleic acid-binding proteins"/>
    <property type="match status" value="1"/>
</dbReference>
<dbReference type="PROSITE" id="PS00055">
    <property type="entry name" value="RIBOSOMAL_S12"/>
    <property type="match status" value="1"/>
</dbReference>
<sequence length="125" mass="13614">MPTISQLVRKGRKTIASASDSPALKECPQKRGVCTVVKTTTPKKPNSALRKVARIRLTNGYEVTAYIPGVGHNLQEHSVVLIRGGRVKDLPGVRYHIVRGALDAAGVANRMQSRSKYGAKKPKQK</sequence>